<evidence type="ECO:0000305" key="1"/>
<comment type="subcellular location">
    <subcellularLocation>
        <location>Plastid</location>
        <location>Chloroplast</location>
    </subcellularLocation>
</comment>
<comment type="similarity">
    <text evidence="1">Belongs to the universal ribosomal protein uS2 family.</text>
</comment>
<comment type="sequence caution" evidence="1">
    <conflict type="erroneous initiation">
        <sequence resource="EMBL-CDS" id="AAS46049"/>
    </conflict>
</comment>
<organism>
    <name type="scientific">Oryza sativa subsp. indica</name>
    <name type="common">Rice</name>
    <dbReference type="NCBI Taxonomy" id="39946"/>
    <lineage>
        <taxon>Eukaryota</taxon>
        <taxon>Viridiplantae</taxon>
        <taxon>Streptophyta</taxon>
        <taxon>Embryophyta</taxon>
        <taxon>Tracheophyta</taxon>
        <taxon>Spermatophyta</taxon>
        <taxon>Magnoliopsida</taxon>
        <taxon>Liliopsida</taxon>
        <taxon>Poales</taxon>
        <taxon>Poaceae</taxon>
        <taxon>BOP clade</taxon>
        <taxon>Oryzoideae</taxon>
        <taxon>Oryzeae</taxon>
        <taxon>Oryzinae</taxon>
        <taxon>Oryza</taxon>
        <taxon>Oryza sativa</taxon>
    </lineage>
</organism>
<accession>P0C481</accession>
<accession>P12145</accession>
<accession>Q6QY17</accession>
<accession>Q6QY80</accession>
<proteinExistence type="inferred from homology"/>
<name>RR2_ORYSI</name>
<keyword id="KW-0150">Chloroplast</keyword>
<keyword id="KW-0934">Plastid</keyword>
<keyword id="KW-1185">Reference proteome</keyword>
<keyword id="KW-0687">Ribonucleoprotein</keyword>
<keyword id="KW-0689">Ribosomal protein</keyword>
<protein>
    <recommendedName>
        <fullName evidence="1">Small ribosomal subunit protein uS2c</fullName>
    </recommendedName>
    <alternativeName>
        <fullName>30S ribosomal protein S2, chloroplastic</fullName>
    </alternativeName>
</protein>
<geneLocation type="chloroplast"/>
<dbReference type="EMBL" id="AY522329">
    <property type="protein sequence ID" value="AAS46049.1"/>
    <property type="status" value="ALT_INIT"/>
    <property type="molecule type" value="Genomic_DNA"/>
</dbReference>
<dbReference type="RefSeq" id="YP_009161357.1">
    <property type="nucleotide sequence ID" value="NC_027678.1"/>
</dbReference>
<dbReference type="RefSeq" id="YP_654209.2">
    <property type="nucleotide sequence ID" value="NC_008155.1"/>
</dbReference>
<dbReference type="SMR" id="P0C481"/>
<dbReference type="STRING" id="39946.P0C481"/>
<dbReference type="GeneID" id="4126925"/>
<dbReference type="HOGENOM" id="CLU_138433_0_0_1"/>
<dbReference type="Proteomes" id="UP000007015">
    <property type="component" value="Chloroplast"/>
</dbReference>
<dbReference type="GO" id="GO:0009507">
    <property type="term" value="C:chloroplast"/>
    <property type="evidence" value="ECO:0007669"/>
    <property type="project" value="UniProtKB-SubCell"/>
</dbReference>
<dbReference type="GO" id="GO:0005763">
    <property type="term" value="C:mitochondrial small ribosomal subunit"/>
    <property type="evidence" value="ECO:0007669"/>
    <property type="project" value="TreeGrafter"/>
</dbReference>
<dbReference type="GO" id="GO:0009536">
    <property type="term" value="C:plastid"/>
    <property type="evidence" value="ECO:0000305"/>
    <property type="project" value="Gramene"/>
</dbReference>
<dbReference type="GO" id="GO:0003735">
    <property type="term" value="F:structural constituent of ribosome"/>
    <property type="evidence" value="ECO:0007669"/>
    <property type="project" value="InterPro"/>
</dbReference>
<dbReference type="GO" id="GO:0006412">
    <property type="term" value="P:translation"/>
    <property type="evidence" value="ECO:0007669"/>
    <property type="project" value="UniProtKB-UniRule"/>
</dbReference>
<dbReference type="CDD" id="cd01425">
    <property type="entry name" value="RPS2"/>
    <property type="match status" value="1"/>
</dbReference>
<dbReference type="FunFam" id="1.10.287.610:FF:000001">
    <property type="entry name" value="30S ribosomal protein S2"/>
    <property type="match status" value="1"/>
</dbReference>
<dbReference type="Gene3D" id="3.40.50.10490">
    <property type="entry name" value="Glucose-6-phosphate isomerase like protein, domain 1"/>
    <property type="match status" value="1"/>
</dbReference>
<dbReference type="Gene3D" id="1.10.287.610">
    <property type="entry name" value="Helix hairpin bin"/>
    <property type="match status" value="1"/>
</dbReference>
<dbReference type="HAMAP" id="MF_00291_B">
    <property type="entry name" value="Ribosomal_uS2_B"/>
    <property type="match status" value="1"/>
</dbReference>
<dbReference type="InterPro" id="IPR001865">
    <property type="entry name" value="Ribosomal_uS2"/>
</dbReference>
<dbReference type="InterPro" id="IPR005706">
    <property type="entry name" value="Ribosomal_uS2_bac/mit/plastid"/>
</dbReference>
<dbReference type="InterPro" id="IPR018130">
    <property type="entry name" value="Ribosomal_uS2_CS"/>
</dbReference>
<dbReference type="InterPro" id="IPR023591">
    <property type="entry name" value="Ribosomal_uS2_flav_dom_sf"/>
</dbReference>
<dbReference type="NCBIfam" id="TIGR01011">
    <property type="entry name" value="rpsB_bact"/>
    <property type="match status" value="1"/>
</dbReference>
<dbReference type="PANTHER" id="PTHR12534">
    <property type="entry name" value="30S RIBOSOMAL PROTEIN S2 PROKARYOTIC AND ORGANELLAR"/>
    <property type="match status" value="1"/>
</dbReference>
<dbReference type="PANTHER" id="PTHR12534:SF0">
    <property type="entry name" value="SMALL RIBOSOMAL SUBUNIT PROTEIN US2M"/>
    <property type="match status" value="1"/>
</dbReference>
<dbReference type="Pfam" id="PF00318">
    <property type="entry name" value="Ribosomal_S2"/>
    <property type="match status" value="1"/>
</dbReference>
<dbReference type="PRINTS" id="PR00395">
    <property type="entry name" value="RIBOSOMALS2"/>
</dbReference>
<dbReference type="SUPFAM" id="SSF52313">
    <property type="entry name" value="Ribosomal protein S2"/>
    <property type="match status" value="1"/>
</dbReference>
<dbReference type="PROSITE" id="PS00962">
    <property type="entry name" value="RIBOSOMAL_S2_1"/>
    <property type="match status" value="1"/>
</dbReference>
<dbReference type="PROSITE" id="PS00963">
    <property type="entry name" value="RIBOSOMAL_S2_2"/>
    <property type="match status" value="1"/>
</dbReference>
<reference key="1">
    <citation type="journal article" date="2004" name="Plant Physiol.">
        <title>A comparison of rice chloroplast genomes.</title>
        <authorList>
            <person name="Tang J."/>
            <person name="Xia H."/>
            <person name="Cao M."/>
            <person name="Zhang X."/>
            <person name="Zeng W."/>
            <person name="Hu S."/>
            <person name="Tong W."/>
            <person name="Wang J."/>
            <person name="Wang J."/>
            <person name="Yu J."/>
            <person name="Yang H."/>
            <person name="Zhu L."/>
        </authorList>
    </citation>
    <scope>NUCLEOTIDE SEQUENCE [LARGE SCALE GENOMIC DNA]</scope>
    <source>
        <strain>cv. 93-11</strain>
    </source>
</reference>
<feature type="chain" id="PRO_0000290079" description="Small ribosomal subunit protein uS2c">
    <location>
        <begin position="1"/>
        <end position="236"/>
    </location>
</feature>
<sequence>MTRRYWNINLKEMIEAGVHFGHGIKKWNPKMAPYISAKRKGTHITNLARTTRFLSEACDLVFDAASQGKSFLIVGTKKRAADLVASAAIRARCHYVNKKWFSGMLTNWSITKTRLSQFRDLRAEEKMEKFHHLPKRDVAILKRKLSTLQRYLGGIKYMTRLPDIVIVLDQQKEYIALRECAILGIPTISLADTNCDPDLANISIPANDDTMTSIRLILNKLVFAICEGRSLYIRNH</sequence>
<gene>
    <name type="primary">rps2</name>
    <name type="ORF">9311038</name>
</gene>